<dbReference type="EC" id="2.3.1.274" evidence="1"/>
<dbReference type="EMBL" id="CP000377">
    <property type="protein sequence ID" value="ABF63648.1"/>
    <property type="molecule type" value="Genomic_DNA"/>
</dbReference>
<dbReference type="RefSeq" id="WP_011538259.1">
    <property type="nucleotide sequence ID" value="NC_008044.1"/>
</dbReference>
<dbReference type="SMR" id="Q1GI68"/>
<dbReference type="STRING" id="292414.TM1040_0915"/>
<dbReference type="KEGG" id="sit:TM1040_0915"/>
<dbReference type="eggNOG" id="COG0416">
    <property type="taxonomic scope" value="Bacteria"/>
</dbReference>
<dbReference type="HOGENOM" id="CLU_039379_1_0_5"/>
<dbReference type="OrthoDB" id="9806408at2"/>
<dbReference type="UniPathway" id="UPA00085"/>
<dbReference type="Proteomes" id="UP000000636">
    <property type="component" value="Chromosome"/>
</dbReference>
<dbReference type="GO" id="GO:0005737">
    <property type="term" value="C:cytoplasm"/>
    <property type="evidence" value="ECO:0007669"/>
    <property type="project" value="UniProtKB-SubCell"/>
</dbReference>
<dbReference type="GO" id="GO:0043811">
    <property type="term" value="F:phosphate:acyl-[acyl carrier protein] acyltransferase activity"/>
    <property type="evidence" value="ECO:0007669"/>
    <property type="project" value="UniProtKB-UniRule"/>
</dbReference>
<dbReference type="GO" id="GO:0006633">
    <property type="term" value="P:fatty acid biosynthetic process"/>
    <property type="evidence" value="ECO:0007669"/>
    <property type="project" value="UniProtKB-UniRule"/>
</dbReference>
<dbReference type="GO" id="GO:0008654">
    <property type="term" value="P:phospholipid biosynthetic process"/>
    <property type="evidence" value="ECO:0007669"/>
    <property type="project" value="UniProtKB-KW"/>
</dbReference>
<dbReference type="Gene3D" id="3.40.718.10">
    <property type="entry name" value="Isopropylmalate Dehydrogenase"/>
    <property type="match status" value="1"/>
</dbReference>
<dbReference type="HAMAP" id="MF_00019">
    <property type="entry name" value="PlsX"/>
    <property type="match status" value="1"/>
</dbReference>
<dbReference type="InterPro" id="IPR003664">
    <property type="entry name" value="FA_synthesis"/>
</dbReference>
<dbReference type="InterPro" id="IPR012281">
    <property type="entry name" value="Phospholipid_synth_PlsX-like"/>
</dbReference>
<dbReference type="NCBIfam" id="TIGR00182">
    <property type="entry name" value="plsX"/>
    <property type="match status" value="1"/>
</dbReference>
<dbReference type="PANTHER" id="PTHR30100">
    <property type="entry name" value="FATTY ACID/PHOSPHOLIPID SYNTHESIS PROTEIN PLSX"/>
    <property type="match status" value="1"/>
</dbReference>
<dbReference type="PANTHER" id="PTHR30100:SF1">
    <property type="entry name" value="PHOSPHATE ACYLTRANSFERASE"/>
    <property type="match status" value="1"/>
</dbReference>
<dbReference type="Pfam" id="PF02504">
    <property type="entry name" value="FA_synthesis"/>
    <property type="match status" value="1"/>
</dbReference>
<dbReference type="PIRSF" id="PIRSF002465">
    <property type="entry name" value="Phsphlp_syn_PlsX"/>
    <property type="match status" value="1"/>
</dbReference>
<dbReference type="SUPFAM" id="SSF53659">
    <property type="entry name" value="Isocitrate/Isopropylmalate dehydrogenase-like"/>
    <property type="match status" value="1"/>
</dbReference>
<comment type="function">
    <text evidence="1">Catalyzes the reversible formation of acyl-phosphate (acyl-PO(4)) from acyl-[acyl-carrier-protein] (acyl-ACP). This enzyme utilizes acyl-ACP as fatty acyl donor, but not acyl-CoA.</text>
</comment>
<comment type="catalytic activity">
    <reaction evidence="1">
        <text>a fatty acyl-[ACP] + phosphate = an acyl phosphate + holo-[ACP]</text>
        <dbReference type="Rhea" id="RHEA:42292"/>
        <dbReference type="Rhea" id="RHEA-COMP:9685"/>
        <dbReference type="Rhea" id="RHEA-COMP:14125"/>
        <dbReference type="ChEBI" id="CHEBI:43474"/>
        <dbReference type="ChEBI" id="CHEBI:59918"/>
        <dbReference type="ChEBI" id="CHEBI:64479"/>
        <dbReference type="ChEBI" id="CHEBI:138651"/>
        <dbReference type="EC" id="2.3.1.274"/>
    </reaction>
</comment>
<comment type="pathway">
    <text evidence="1">Lipid metabolism; phospholipid metabolism.</text>
</comment>
<comment type="subunit">
    <text evidence="1">Homodimer. Probably interacts with PlsY.</text>
</comment>
<comment type="subcellular location">
    <subcellularLocation>
        <location evidence="1">Cytoplasm</location>
    </subcellularLocation>
    <text evidence="1">Associated with the membrane possibly through PlsY.</text>
</comment>
<comment type="similarity">
    <text evidence="1">Belongs to the PlsX family.</text>
</comment>
<evidence type="ECO:0000255" key="1">
    <source>
        <dbReference type="HAMAP-Rule" id="MF_00019"/>
    </source>
</evidence>
<evidence type="ECO:0000256" key="2">
    <source>
        <dbReference type="SAM" id="MobiDB-lite"/>
    </source>
</evidence>
<sequence length="375" mass="39270">MTGNTAPSQADARRTVISVDAMGGDAGPAVVVAGIAKSASKNPDIGFLLHGPAEELEPLVARRKTLKGRVEIRDARDVVTMEDKPSQVMRNGKGTSMWSALESVRSGEADGVVSCGNTGALMALSMLRLRKLPGVNRPAIAILWPSRNPQGFNVMLDVGADVRADAEDLLQYALMGTSYIRNSMDLPCPRVGLLNVGTEEHKGRAELKEAYALISQNAEKANFEFVGFVEGSDIPGDIADVIVTDGFTGNVAIKTGEGTASLLRSAIREAFEYSILSRLAALLAYTSLSRLAKRIDPRRVNGGVFLGLNGTVVKSHGGADATGVSAAVKLAFLLAEQGFAEKLAARVASAVELAQDDATSADADAPGDSETGSTN</sequence>
<organism>
    <name type="scientific">Ruegeria sp. (strain TM1040)</name>
    <name type="common">Silicibacter sp.</name>
    <dbReference type="NCBI Taxonomy" id="292414"/>
    <lineage>
        <taxon>Bacteria</taxon>
        <taxon>Pseudomonadati</taxon>
        <taxon>Pseudomonadota</taxon>
        <taxon>Alphaproteobacteria</taxon>
        <taxon>Rhodobacterales</taxon>
        <taxon>Roseobacteraceae</taxon>
        <taxon>Ruegeria</taxon>
    </lineage>
</organism>
<gene>
    <name evidence="1" type="primary">plsX</name>
    <name type="ordered locus">TM1040_0915</name>
</gene>
<proteinExistence type="inferred from homology"/>
<keyword id="KW-0963">Cytoplasm</keyword>
<keyword id="KW-0444">Lipid biosynthesis</keyword>
<keyword id="KW-0443">Lipid metabolism</keyword>
<keyword id="KW-0594">Phospholipid biosynthesis</keyword>
<keyword id="KW-1208">Phospholipid metabolism</keyword>
<keyword id="KW-1185">Reference proteome</keyword>
<keyword id="KW-0808">Transferase</keyword>
<reference key="1">
    <citation type="submission" date="2006-05" db="EMBL/GenBank/DDBJ databases">
        <title>Complete sequence of chromosome of Silicibacter sp. TM1040.</title>
        <authorList>
            <consortium name="US DOE Joint Genome Institute"/>
            <person name="Copeland A."/>
            <person name="Lucas S."/>
            <person name="Lapidus A."/>
            <person name="Barry K."/>
            <person name="Detter J.C."/>
            <person name="Glavina del Rio T."/>
            <person name="Hammon N."/>
            <person name="Israni S."/>
            <person name="Dalin E."/>
            <person name="Tice H."/>
            <person name="Pitluck S."/>
            <person name="Brettin T."/>
            <person name="Bruce D."/>
            <person name="Han C."/>
            <person name="Tapia R."/>
            <person name="Goodwin L."/>
            <person name="Thompson L.S."/>
            <person name="Gilna P."/>
            <person name="Schmutz J."/>
            <person name="Larimer F."/>
            <person name="Land M."/>
            <person name="Hauser L."/>
            <person name="Kyrpides N."/>
            <person name="Kim E."/>
            <person name="Belas R."/>
            <person name="Moran M.A."/>
            <person name="Buchan A."/>
            <person name="Gonzalez J.M."/>
            <person name="Schell M.A."/>
            <person name="Sun F."/>
            <person name="Richardson P."/>
        </authorList>
    </citation>
    <scope>NUCLEOTIDE SEQUENCE [LARGE SCALE GENOMIC DNA]</scope>
    <source>
        <strain>TM1040</strain>
    </source>
</reference>
<feature type="chain" id="PRO_0000329267" description="Phosphate acyltransferase">
    <location>
        <begin position="1"/>
        <end position="375"/>
    </location>
</feature>
<feature type="region of interest" description="Disordered" evidence="2">
    <location>
        <begin position="354"/>
        <end position="375"/>
    </location>
</feature>
<feature type="compositionally biased region" description="Low complexity" evidence="2">
    <location>
        <begin position="356"/>
        <end position="368"/>
    </location>
</feature>
<accession>Q1GI68</accession>
<name>PLSX_RUEST</name>
<protein>
    <recommendedName>
        <fullName evidence="1">Phosphate acyltransferase</fullName>
        <ecNumber evidence="1">2.3.1.274</ecNumber>
    </recommendedName>
    <alternativeName>
        <fullName evidence="1">Acyl-ACP phosphotransacylase</fullName>
    </alternativeName>
    <alternativeName>
        <fullName evidence="1">Acyl-[acyl-carrier-protein]--phosphate acyltransferase</fullName>
    </alternativeName>
    <alternativeName>
        <fullName evidence="1">Phosphate-acyl-ACP acyltransferase</fullName>
    </alternativeName>
</protein>